<feature type="chain" id="PRO_0000306203" description="Photosystem II reaction center protein L">
    <location>
        <begin position="1"/>
        <end position="39"/>
    </location>
</feature>
<feature type="transmembrane region" description="Helical" evidence="1">
    <location>
        <begin position="18"/>
        <end position="38"/>
    </location>
</feature>
<protein>
    <recommendedName>
        <fullName evidence="1">Photosystem II reaction center protein L</fullName>
        <shortName evidence="1">PSII-L</shortName>
    </recommendedName>
</protein>
<dbReference type="EMBL" id="CP000551">
    <property type="protein sequence ID" value="ABM69610.1"/>
    <property type="molecule type" value="Genomic_DNA"/>
</dbReference>
<dbReference type="RefSeq" id="WP_002806119.1">
    <property type="nucleotide sequence ID" value="NC_008816.1"/>
</dbReference>
<dbReference type="SMR" id="A2BP99"/>
<dbReference type="STRING" id="146891.A9601_03221"/>
<dbReference type="KEGG" id="pmb:A9601_03221"/>
<dbReference type="HOGENOM" id="CLU_214425_0_0_3"/>
<dbReference type="OrthoDB" id="560356at2"/>
<dbReference type="Proteomes" id="UP000002590">
    <property type="component" value="Chromosome"/>
</dbReference>
<dbReference type="GO" id="GO:0009539">
    <property type="term" value="C:photosystem II reaction center"/>
    <property type="evidence" value="ECO:0007669"/>
    <property type="project" value="InterPro"/>
</dbReference>
<dbReference type="GO" id="GO:0031676">
    <property type="term" value="C:plasma membrane-derived thylakoid membrane"/>
    <property type="evidence" value="ECO:0007669"/>
    <property type="project" value="UniProtKB-SubCell"/>
</dbReference>
<dbReference type="GO" id="GO:0015979">
    <property type="term" value="P:photosynthesis"/>
    <property type="evidence" value="ECO:0007669"/>
    <property type="project" value="UniProtKB-UniRule"/>
</dbReference>
<dbReference type="HAMAP" id="MF_01317">
    <property type="entry name" value="PSII_PsbL"/>
    <property type="match status" value="1"/>
</dbReference>
<dbReference type="InterPro" id="IPR003372">
    <property type="entry name" value="PSII_PsbL"/>
</dbReference>
<dbReference type="InterPro" id="IPR037266">
    <property type="entry name" value="PSII_PsbL_sf"/>
</dbReference>
<dbReference type="NCBIfam" id="NF001972">
    <property type="entry name" value="PRK00753.1"/>
    <property type="match status" value="1"/>
</dbReference>
<dbReference type="Pfam" id="PF02419">
    <property type="entry name" value="PsbL"/>
    <property type="match status" value="1"/>
</dbReference>
<dbReference type="SUPFAM" id="SSF161017">
    <property type="entry name" value="Photosystem II reaction center protein L, PsbL"/>
    <property type="match status" value="1"/>
</dbReference>
<evidence type="ECO:0000255" key="1">
    <source>
        <dbReference type="HAMAP-Rule" id="MF_01317"/>
    </source>
</evidence>
<evidence type="ECO:0000305" key="2"/>
<name>PSBL_PROMS</name>
<proteinExistence type="inferred from homology"/>
<reference key="1">
    <citation type="journal article" date="2007" name="PLoS Genet.">
        <title>Patterns and implications of gene gain and loss in the evolution of Prochlorococcus.</title>
        <authorList>
            <person name="Kettler G.C."/>
            <person name="Martiny A.C."/>
            <person name="Huang K."/>
            <person name="Zucker J."/>
            <person name="Coleman M.L."/>
            <person name="Rodrigue S."/>
            <person name="Chen F."/>
            <person name="Lapidus A."/>
            <person name="Ferriera S."/>
            <person name="Johnson J."/>
            <person name="Steglich C."/>
            <person name="Church G.M."/>
            <person name="Richardson P."/>
            <person name="Chisholm S.W."/>
        </authorList>
    </citation>
    <scope>NUCLEOTIDE SEQUENCE [LARGE SCALE GENOMIC DNA]</scope>
    <source>
        <strain>AS9601</strain>
    </source>
</reference>
<organism>
    <name type="scientific">Prochlorococcus marinus (strain AS9601)</name>
    <dbReference type="NCBI Taxonomy" id="146891"/>
    <lineage>
        <taxon>Bacteria</taxon>
        <taxon>Bacillati</taxon>
        <taxon>Cyanobacteriota</taxon>
        <taxon>Cyanophyceae</taxon>
        <taxon>Synechococcales</taxon>
        <taxon>Prochlorococcaceae</taxon>
        <taxon>Prochlorococcus</taxon>
    </lineage>
</organism>
<keyword id="KW-0472">Membrane</keyword>
<keyword id="KW-0602">Photosynthesis</keyword>
<keyword id="KW-0604">Photosystem II</keyword>
<keyword id="KW-0674">Reaction center</keyword>
<keyword id="KW-0793">Thylakoid</keyword>
<keyword id="KW-0812">Transmembrane</keyword>
<keyword id="KW-1133">Transmembrane helix</keyword>
<comment type="function">
    <text evidence="1">One of the components of the core complex of photosystem II (PSII). PSII is a light-driven water:plastoquinone oxidoreductase that uses light energy to abstract electrons from H(2)O, generating O(2) and a proton gradient subsequently used for ATP formation. It consists of a core antenna complex that captures photons, and an electron transfer chain that converts photonic excitation into a charge separation. This subunit is found at the monomer-monomer interface and is required for correct PSII assembly and/or dimerization.</text>
</comment>
<comment type="subunit">
    <text evidence="2">PSII is composed of 1 copy each of membrane proteins PsbA, PsbB, PsbC, PsbD, PsbE, PsbF, PsbH, PsbI, PsbJ, PsbK, PsbL, PsbM, PsbT, PsbX, PsbY, Psb30/Ycf12, peripheral proteins PsbO, CyanoQ (PsbQ), PsbU, PsbV and a large number of cofactors. It forms dimeric complexes.</text>
</comment>
<comment type="subcellular location">
    <subcellularLocation>
        <location evidence="1">Cellular thylakoid membrane</location>
        <topology evidence="1">Single-pass membrane protein</topology>
    </subcellularLocation>
</comment>
<comment type="similarity">
    <text evidence="1">Belongs to the PsbL family.</text>
</comment>
<sequence length="39" mass="4464">MQVNENPNKVPVELNRTSLYLGLLSVFVLGILFSSYFFN</sequence>
<accession>A2BP99</accession>
<gene>
    <name evidence="1" type="primary">psbL</name>
    <name type="ordered locus">A9601_03221</name>
</gene>